<dbReference type="EC" id="3.6.5.-" evidence="3"/>
<dbReference type="EMBL" id="M14645">
    <property type="protein sequence ID" value="AAA28987.1"/>
    <property type="molecule type" value="Genomic_DNA"/>
</dbReference>
<dbReference type="EMBL" id="AE014297">
    <property type="protein sequence ID" value="AAF54007.1"/>
    <property type="molecule type" value="Genomic_DNA"/>
</dbReference>
<dbReference type="EMBL" id="AY084208">
    <property type="protein sequence ID" value="AAL89946.1"/>
    <property type="molecule type" value="mRNA"/>
</dbReference>
<dbReference type="EMBL" id="BT003630">
    <property type="protein sequence ID" value="AAO39634.1"/>
    <property type="molecule type" value="mRNA"/>
</dbReference>
<dbReference type="EMBL" id="BT016118">
    <property type="protein sequence ID" value="AAV37003.1"/>
    <property type="molecule type" value="mRNA"/>
</dbReference>
<dbReference type="PIR" id="C26488">
    <property type="entry name" value="C26488"/>
</dbReference>
<dbReference type="RefSeq" id="NP_524264.1">
    <property type="nucleotide sequence ID" value="NM_079540.6"/>
</dbReference>
<dbReference type="SMR" id="P06605"/>
<dbReference type="BioGRID" id="66094">
    <property type="interactions" value="20"/>
</dbReference>
<dbReference type="DIP" id="DIP-23082N"/>
<dbReference type="FunCoup" id="P06605">
    <property type="interactions" value="518"/>
</dbReference>
<dbReference type="IntAct" id="P06605">
    <property type="interactions" value="1"/>
</dbReference>
<dbReference type="STRING" id="7227.FBpp0081062"/>
<dbReference type="PaxDb" id="7227-FBpp0081062"/>
<dbReference type="DNASU" id="40904"/>
<dbReference type="EnsemblMetazoa" id="FBtr0081538">
    <property type="protein sequence ID" value="FBpp0081062"/>
    <property type="gene ID" value="FBgn0003885"/>
</dbReference>
<dbReference type="GeneID" id="40904"/>
<dbReference type="KEGG" id="dme:Dmel_CG2512"/>
<dbReference type="AGR" id="FB:FBgn0003885"/>
<dbReference type="CTD" id="40904"/>
<dbReference type="FlyBase" id="FBgn0003885">
    <property type="gene designation" value="alphaTub84D"/>
</dbReference>
<dbReference type="VEuPathDB" id="VectorBase:FBgn0003885"/>
<dbReference type="eggNOG" id="KOG1376">
    <property type="taxonomic scope" value="Eukaryota"/>
</dbReference>
<dbReference type="GeneTree" id="ENSGT00950000182825"/>
<dbReference type="HOGENOM" id="CLU_015718_0_0_1"/>
<dbReference type="InParanoid" id="P06605"/>
<dbReference type="OMA" id="VIDANCT"/>
<dbReference type="OrthoDB" id="1844at2759"/>
<dbReference type="PhylomeDB" id="P06605"/>
<dbReference type="Reactome" id="R-DME-3371497">
    <property type="pathway name" value="HSP90 chaperone cycle for steroid hormone receptors (SHR) in the presence of ligand"/>
</dbReference>
<dbReference type="Reactome" id="R-DME-6807878">
    <property type="pathway name" value="COPI-mediated anterograde transport"/>
</dbReference>
<dbReference type="Reactome" id="R-DME-6811434">
    <property type="pathway name" value="COPI-dependent Golgi-to-ER retrograde traffic"/>
</dbReference>
<dbReference type="Reactome" id="R-DME-6811436">
    <property type="pathway name" value="COPI-independent Golgi-to-ER retrograde traffic"/>
</dbReference>
<dbReference type="Reactome" id="R-DME-983189">
    <property type="pathway name" value="Kinesins"/>
</dbReference>
<dbReference type="SignaLink" id="P06605"/>
<dbReference type="BioGRID-ORCS" id="40904">
    <property type="hits" value="0 hits in 3 CRISPR screens"/>
</dbReference>
<dbReference type="ChiTaRS" id="alphaTub84D">
    <property type="organism name" value="fly"/>
</dbReference>
<dbReference type="GenomeRNAi" id="40904"/>
<dbReference type="PRO" id="PR:P06605"/>
<dbReference type="Proteomes" id="UP000000803">
    <property type="component" value="Chromosome 3R"/>
</dbReference>
<dbReference type="Bgee" id="FBgn0003885">
    <property type="expression patterns" value="Expressed in second segment of antenna (Drosophila) and 182 other cell types or tissues"/>
</dbReference>
<dbReference type="GO" id="GO:0005737">
    <property type="term" value="C:cytoplasm"/>
    <property type="evidence" value="ECO:0000318"/>
    <property type="project" value="GO_Central"/>
</dbReference>
<dbReference type="GO" id="GO:0005874">
    <property type="term" value="C:microtubule"/>
    <property type="evidence" value="ECO:0000318"/>
    <property type="project" value="GO_Central"/>
</dbReference>
<dbReference type="GO" id="GO:0048471">
    <property type="term" value="C:perinuclear region of cytoplasm"/>
    <property type="evidence" value="ECO:0000314"/>
    <property type="project" value="FlyBase"/>
</dbReference>
<dbReference type="GO" id="GO:0005525">
    <property type="term" value="F:GTP binding"/>
    <property type="evidence" value="ECO:0000318"/>
    <property type="project" value="GO_Central"/>
</dbReference>
<dbReference type="GO" id="GO:0016787">
    <property type="term" value="F:hydrolase activity"/>
    <property type="evidence" value="ECO:0007669"/>
    <property type="project" value="UniProtKB-KW"/>
</dbReference>
<dbReference type="GO" id="GO:0046872">
    <property type="term" value="F:metal ion binding"/>
    <property type="evidence" value="ECO:0007669"/>
    <property type="project" value="UniProtKB-KW"/>
</dbReference>
<dbReference type="GO" id="GO:0017022">
    <property type="term" value="F:myosin binding"/>
    <property type="evidence" value="ECO:0000353"/>
    <property type="project" value="FlyBase"/>
</dbReference>
<dbReference type="GO" id="GO:0005200">
    <property type="term" value="F:structural constituent of cytoskeleton"/>
    <property type="evidence" value="ECO:0000318"/>
    <property type="project" value="GO_Central"/>
</dbReference>
<dbReference type="GO" id="GO:0000226">
    <property type="term" value="P:microtubule cytoskeleton organization"/>
    <property type="evidence" value="ECO:0000318"/>
    <property type="project" value="GO_Central"/>
</dbReference>
<dbReference type="GO" id="GO:0000278">
    <property type="term" value="P:mitotic cell cycle"/>
    <property type="evidence" value="ECO:0000318"/>
    <property type="project" value="GO_Central"/>
</dbReference>
<dbReference type="GO" id="GO:0007288">
    <property type="term" value="P:sperm axoneme assembly"/>
    <property type="evidence" value="ECO:0000315"/>
    <property type="project" value="FlyBase"/>
</dbReference>
<dbReference type="GO" id="GO:0007283">
    <property type="term" value="P:spermatogenesis"/>
    <property type="evidence" value="ECO:0000315"/>
    <property type="project" value="FlyBase"/>
</dbReference>
<dbReference type="CDD" id="cd02186">
    <property type="entry name" value="alpha_tubulin"/>
    <property type="match status" value="1"/>
</dbReference>
<dbReference type="FunFam" id="1.10.287.600:FF:000005">
    <property type="entry name" value="Tubulin alpha chain"/>
    <property type="match status" value="1"/>
</dbReference>
<dbReference type="FunFam" id="3.30.1330.20:FF:000001">
    <property type="entry name" value="Tubulin alpha chain"/>
    <property type="match status" value="1"/>
</dbReference>
<dbReference type="FunFam" id="3.40.50.1440:FF:000002">
    <property type="entry name" value="Tubulin alpha chain"/>
    <property type="match status" value="1"/>
</dbReference>
<dbReference type="Gene3D" id="1.10.287.600">
    <property type="entry name" value="Helix hairpin bin"/>
    <property type="match status" value="1"/>
</dbReference>
<dbReference type="Gene3D" id="3.30.1330.20">
    <property type="entry name" value="Tubulin/FtsZ, C-terminal domain"/>
    <property type="match status" value="1"/>
</dbReference>
<dbReference type="Gene3D" id="3.40.50.1440">
    <property type="entry name" value="Tubulin/FtsZ, GTPase domain"/>
    <property type="match status" value="1"/>
</dbReference>
<dbReference type="InterPro" id="IPR002452">
    <property type="entry name" value="Alpha_tubulin"/>
</dbReference>
<dbReference type="InterPro" id="IPR008280">
    <property type="entry name" value="Tub_FtsZ_C"/>
</dbReference>
<dbReference type="InterPro" id="IPR000217">
    <property type="entry name" value="Tubulin"/>
</dbReference>
<dbReference type="InterPro" id="IPR037103">
    <property type="entry name" value="Tubulin/FtsZ-like_C"/>
</dbReference>
<dbReference type="InterPro" id="IPR018316">
    <property type="entry name" value="Tubulin/FtsZ_2-layer-sand-dom"/>
</dbReference>
<dbReference type="InterPro" id="IPR036525">
    <property type="entry name" value="Tubulin/FtsZ_GTPase_sf"/>
</dbReference>
<dbReference type="InterPro" id="IPR023123">
    <property type="entry name" value="Tubulin_C"/>
</dbReference>
<dbReference type="InterPro" id="IPR017975">
    <property type="entry name" value="Tubulin_CS"/>
</dbReference>
<dbReference type="InterPro" id="IPR003008">
    <property type="entry name" value="Tubulin_FtsZ_GTPase"/>
</dbReference>
<dbReference type="PANTHER" id="PTHR11588">
    <property type="entry name" value="TUBULIN"/>
    <property type="match status" value="1"/>
</dbReference>
<dbReference type="Pfam" id="PF00091">
    <property type="entry name" value="Tubulin"/>
    <property type="match status" value="1"/>
</dbReference>
<dbReference type="Pfam" id="PF03953">
    <property type="entry name" value="Tubulin_C"/>
    <property type="match status" value="1"/>
</dbReference>
<dbReference type="PRINTS" id="PR01162">
    <property type="entry name" value="ALPHATUBULIN"/>
</dbReference>
<dbReference type="PRINTS" id="PR01161">
    <property type="entry name" value="TUBULIN"/>
</dbReference>
<dbReference type="SMART" id="SM00864">
    <property type="entry name" value="Tubulin"/>
    <property type="match status" value="1"/>
</dbReference>
<dbReference type="SMART" id="SM00865">
    <property type="entry name" value="Tubulin_C"/>
    <property type="match status" value="1"/>
</dbReference>
<dbReference type="SUPFAM" id="SSF55307">
    <property type="entry name" value="Tubulin C-terminal domain-like"/>
    <property type="match status" value="1"/>
</dbReference>
<dbReference type="SUPFAM" id="SSF52490">
    <property type="entry name" value="Tubulin nucleotide-binding domain-like"/>
    <property type="match status" value="1"/>
</dbReference>
<dbReference type="PROSITE" id="PS00227">
    <property type="entry name" value="TUBULIN"/>
    <property type="match status" value="1"/>
</dbReference>
<organism>
    <name type="scientific">Drosophila melanogaster</name>
    <name type="common">Fruit fly</name>
    <dbReference type="NCBI Taxonomy" id="7227"/>
    <lineage>
        <taxon>Eukaryota</taxon>
        <taxon>Metazoa</taxon>
        <taxon>Ecdysozoa</taxon>
        <taxon>Arthropoda</taxon>
        <taxon>Hexapoda</taxon>
        <taxon>Insecta</taxon>
        <taxon>Pterygota</taxon>
        <taxon>Neoptera</taxon>
        <taxon>Endopterygota</taxon>
        <taxon>Diptera</taxon>
        <taxon>Brachycera</taxon>
        <taxon>Muscomorpha</taxon>
        <taxon>Ephydroidea</taxon>
        <taxon>Drosophilidae</taxon>
        <taxon>Drosophila</taxon>
        <taxon>Sophophora</taxon>
    </lineage>
</organism>
<protein>
    <recommendedName>
        <fullName>Tubulin alpha-3 chain</fullName>
        <ecNumber evidence="3">3.6.5.-</ecNumber>
    </recommendedName>
</protein>
<gene>
    <name type="primary">alphaTub84D</name>
    <name type="synonym">TubA84D</name>
    <name type="ORF">CG2512</name>
</gene>
<reference key="1">
    <citation type="journal article" date="1986" name="Proc. Natl. Acad. Sci. U.S.A.">
        <title>Tissue-specific and constitutive alpha-tubulin genes of Drosophila melanogaster code for structurally distinct proteins.</title>
        <authorList>
            <person name="Theurkauf W.E."/>
            <person name="Baum H."/>
            <person name="Bo J."/>
            <person name="Wensink P.C."/>
        </authorList>
    </citation>
    <scope>NUCLEOTIDE SEQUENCE [GENOMIC DNA]</scope>
</reference>
<reference key="2">
    <citation type="submission" date="1987-05" db="EMBL/GenBank/DDBJ databases">
        <authorList>
            <person name="Wensink P.C."/>
        </authorList>
    </citation>
    <scope>SEQUENCE REVISION</scope>
</reference>
<reference key="3">
    <citation type="journal article" date="2000" name="Science">
        <title>The genome sequence of Drosophila melanogaster.</title>
        <authorList>
            <person name="Adams M.D."/>
            <person name="Celniker S.E."/>
            <person name="Holt R.A."/>
            <person name="Evans C.A."/>
            <person name="Gocayne J.D."/>
            <person name="Amanatides P.G."/>
            <person name="Scherer S.E."/>
            <person name="Li P.W."/>
            <person name="Hoskins R.A."/>
            <person name="Galle R.F."/>
            <person name="George R.A."/>
            <person name="Lewis S.E."/>
            <person name="Richards S."/>
            <person name="Ashburner M."/>
            <person name="Henderson S.N."/>
            <person name="Sutton G.G."/>
            <person name="Wortman J.R."/>
            <person name="Yandell M.D."/>
            <person name="Zhang Q."/>
            <person name="Chen L.X."/>
            <person name="Brandon R.C."/>
            <person name="Rogers Y.-H.C."/>
            <person name="Blazej R.G."/>
            <person name="Champe M."/>
            <person name="Pfeiffer B.D."/>
            <person name="Wan K.H."/>
            <person name="Doyle C."/>
            <person name="Baxter E.G."/>
            <person name="Helt G."/>
            <person name="Nelson C.R."/>
            <person name="Miklos G.L.G."/>
            <person name="Abril J.F."/>
            <person name="Agbayani A."/>
            <person name="An H.-J."/>
            <person name="Andrews-Pfannkoch C."/>
            <person name="Baldwin D."/>
            <person name="Ballew R.M."/>
            <person name="Basu A."/>
            <person name="Baxendale J."/>
            <person name="Bayraktaroglu L."/>
            <person name="Beasley E.M."/>
            <person name="Beeson K.Y."/>
            <person name="Benos P.V."/>
            <person name="Berman B.P."/>
            <person name="Bhandari D."/>
            <person name="Bolshakov S."/>
            <person name="Borkova D."/>
            <person name="Botchan M.R."/>
            <person name="Bouck J."/>
            <person name="Brokstein P."/>
            <person name="Brottier P."/>
            <person name="Burtis K.C."/>
            <person name="Busam D.A."/>
            <person name="Butler H."/>
            <person name="Cadieu E."/>
            <person name="Center A."/>
            <person name="Chandra I."/>
            <person name="Cherry J.M."/>
            <person name="Cawley S."/>
            <person name="Dahlke C."/>
            <person name="Davenport L.B."/>
            <person name="Davies P."/>
            <person name="de Pablos B."/>
            <person name="Delcher A."/>
            <person name="Deng Z."/>
            <person name="Mays A.D."/>
            <person name="Dew I."/>
            <person name="Dietz S.M."/>
            <person name="Dodson K."/>
            <person name="Doup L.E."/>
            <person name="Downes M."/>
            <person name="Dugan-Rocha S."/>
            <person name="Dunkov B.C."/>
            <person name="Dunn P."/>
            <person name="Durbin K.J."/>
            <person name="Evangelista C.C."/>
            <person name="Ferraz C."/>
            <person name="Ferriera S."/>
            <person name="Fleischmann W."/>
            <person name="Fosler C."/>
            <person name="Gabrielian A.E."/>
            <person name="Garg N.S."/>
            <person name="Gelbart W.M."/>
            <person name="Glasser K."/>
            <person name="Glodek A."/>
            <person name="Gong F."/>
            <person name="Gorrell J.H."/>
            <person name="Gu Z."/>
            <person name="Guan P."/>
            <person name="Harris M."/>
            <person name="Harris N.L."/>
            <person name="Harvey D.A."/>
            <person name="Heiman T.J."/>
            <person name="Hernandez J.R."/>
            <person name="Houck J."/>
            <person name="Hostin D."/>
            <person name="Houston K.A."/>
            <person name="Howland T.J."/>
            <person name="Wei M.-H."/>
            <person name="Ibegwam C."/>
            <person name="Jalali M."/>
            <person name="Kalush F."/>
            <person name="Karpen G.H."/>
            <person name="Ke Z."/>
            <person name="Kennison J.A."/>
            <person name="Ketchum K.A."/>
            <person name="Kimmel B.E."/>
            <person name="Kodira C.D."/>
            <person name="Kraft C.L."/>
            <person name="Kravitz S."/>
            <person name="Kulp D."/>
            <person name="Lai Z."/>
            <person name="Lasko P."/>
            <person name="Lei Y."/>
            <person name="Levitsky A.A."/>
            <person name="Li J.H."/>
            <person name="Li Z."/>
            <person name="Liang Y."/>
            <person name="Lin X."/>
            <person name="Liu X."/>
            <person name="Mattei B."/>
            <person name="McIntosh T.C."/>
            <person name="McLeod M.P."/>
            <person name="McPherson D."/>
            <person name="Merkulov G."/>
            <person name="Milshina N.V."/>
            <person name="Mobarry C."/>
            <person name="Morris J."/>
            <person name="Moshrefi A."/>
            <person name="Mount S.M."/>
            <person name="Moy M."/>
            <person name="Murphy B."/>
            <person name="Murphy L."/>
            <person name="Muzny D.M."/>
            <person name="Nelson D.L."/>
            <person name="Nelson D.R."/>
            <person name="Nelson K.A."/>
            <person name="Nixon K."/>
            <person name="Nusskern D.R."/>
            <person name="Pacleb J.M."/>
            <person name="Palazzolo M."/>
            <person name="Pittman G.S."/>
            <person name="Pan S."/>
            <person name="Pollard J."/>
            <person name="Puri V."/>
            <person name="Reese M.G."/>
            <person name="Reinert K."/>
            <person name="Remington K."/>
            <person name="Saunders R.D.C."/>
            <person name="Scheeler F."/>
            <person name="Shen H."/>
            <person name="Shue B.C."/>
            <person name="Siden-Kiamos I."/>
            <person name="Simpson M."/>
            <person name="Skupski M.P."/>
            <person name="Smith T.J."/>
            <person name="Spier E."/>
            <person name="Spradling A.C."/>
            <person name="Stapleton M."/>
            <person name="Strong R."/>
            <person name="Sun E."/>
            <person name="Svirskas R."/>
            <person name="Tector C."/>
            <person name="Turner R."/>
            <person name="Venter E."/>
            <person name="Wang A.H."/>
            <person name="Wang X."/>
            <person name="Wang Z.-Y."/>
            <person name="Wassarman D.A."/>
            <person name="Weinstock G.M."/>
            <person name="Weissenbach J."/>
            <person name="Williams S.M."/>
            <person name="Woodage T."/>
            <person name="Worley K.C."/>
            <person name="Wu D."/>
            <person name="Yang S."/>
            <person name="Yao Q.A."/>
            <person name="Ye J."/>
            <person name="Yeh R.-F."/>
            <person name="Zaveri J.S."/>
            <person name="Zhan M."/>
            <person name="Zhang G."/>
            <person name="Zhao Q."/>
            <person name="Zheng L."/>
            <person name="Zheng X.H."/>
            <person name="Zhong F.N."/>
            <person name="Zhong W."/>
            <person name="Zhou X."/>
            <person name="Zhu S.C."/>
            <person name="Zhu X."/>
            <person name="Smith H.O."/>
            <person name="Gibbs R.A."/>
            <person name="Myers E.W."/>
            <person name="Rubin G.M."/>
            <person name="Venter J.C."/>
        </authorList>
    </citation>
    <scope>NUCLEOTIDE SEQUENCE [LARGE SCALE GENOMIC DNA]</scope>
    <source>
        <strain>Berkeley</strain>
    </source>
</reference>
<reference key="4">
    <citation type="journal article" date="2002" name="Genome Biol.">
        <title>Annotation of the Drosophila melanogaster euchromatic genome: a systematic review.</title>
        <authorList>
            <person name="Misra S."/>
            <person name="Crosby M.A."/>
            <person name="Mungall C.J."/>
            <person name="Matthews B.B."/>
            <person name="Campbell K.S."/>
            <person name="Hradecky P."/>
            <person name="Huang Y."/>
            <person name="Kaminker J.S."/>
            <person name="Millburn G.H."/>
            <person name="Prochnik S.E."/>
            <person name="Smith C.D."/>
            <person name="Tupy J.L."/>
            <person name="Whitfield E.J."/>
            <person name="Bayraktaroglu L."/>
            <person name="Berman B.P."/>
            <person name="Bettencourt B.R."/>
            <person name="Celniker S.E."/>
            <person name="de Grey A.D.N.J."/>
            <person name="Drysdale R.A."/>
            <person name="Harris N.L."/>
            <person name="Richter J."/>
            <person name="Russo S."/>
            <person name="Schroeder A.J."/>
            <person name="Shu S.Q."/>
            <person name="Stapleton M."/>
            <person name="Yamada C."/>
            <person name="Ashburner M."/>
            <person name="Gelbart W.M."/>
            <person name="Rubin G.M."/>
            <person name="Lewis S.E."/>
        </authorList>
    </citation>
    <scope>GENOME REANNOTATION</scope>
    <source>
        <strain>Berkeley</strain>
    </source>
</reference>
<reference key="5">
    <citation type="journal article" date="2002" name="Genome Biol.">
        <title>A Drosophila full-length cDNA resource.</title>
        <authorList>
            <person name="Stapleton M."/>
            <person name="Carlson J.W."/>
            <person name="Brokstein P."/>
            <person name="Yu C."/>
            <person name="Champe M."/>
            <person name="George R.A."/>
            <person name="Guarin H."/>
            <person name="Kronmiller B."/>
            <person name="Pacleb J.M."/>
            <person name="Park S."/>
            <person name="Wan K.H."/>
            <person name="Rubin G.M."/>
            <person name="Celniker S.E."/>
        </authorList>
    </citation>
    <scope>NUCLEOTIDE SEQUENCE [LARGE SCALE MRNA]</scope>
    <source>
        <strain>Berkeley</strain>
        <tissue>Embryo</tissue>
    </source>
</reference>
<reference key="6">
    <citation type="submission" date="2004-10" db="EMBL/GenBank/DDBJ databases">
        <authorList>
            <person name="Stapleton M."/>
            <person name="Brokstein P."/>
            <person name="Hong L."/>
            <person name="Agbayani A."/>
            <person name="Carlson J.W."/>
            <person name="Champe M."/>
            <person name="Chavez C."/>
            <person name="Dorsett V."/>
            <person name="Dresnek D."/>
            <person name="Farfan D."/>
            <person name="Frise E."/>
            <person name="George R.A."/>
            <person name="Gonzalez M."/>
            <person name="Guarin H."/>
            <person name="Kronmiller B."/>
            <person name="Li P.W."/>
            <person name="Liao G."/>
            <person name="Miranda A."/>
            <person name="Mungall C.J."/>
            <person name="Nunoo J."/>
            <person name="Pacleb J.M."/>
            <person name="Paragas V."/>
            <person name="Park S."/>
            <person name="Patel S."/>
            <person name="Phouanenavong S."/>
            <person name="Wan K.H."/>
            <person name="Yu C."/>
            <person name="Lewis S.E."/>
            <person name="Rubin G.M."/>
            <person name="Celniker S.E."/>
        </authorList>
    </citation>
    <scope>NUCLEOTIDE SEQUENCE [LARGE SCALE MRNA]</scope>
    <source>
        <strain>Berkeley</strain>
        <tissue>Embryo</tissue>
        <tissue>Testis</tissue>
    </source>
</reference>
<feature type="chain" id="PRO_0000048160" description="Tubulin alpha-3 chain">
    <location>
        <begin position="1"/>
        <end position="450"/>
    </location>
</feature>
<feature type="active site" evidence="3">
    <location>
        <position position="254"/>
    </location>
</feature>
<feature type="binding site" evidence="3">
    <location>
        <position position="11"/>
    </location>
    <ligand>
        <name>GTP</name>
        <dbReference type="ChEBI" id="CHEBI:37565"/>
    </ligand>
</feature>
<feature type="binding site" evidence="3">
    <location>
        <position position="71"/>
    </location>
    <ligand>
        <name>GTP</name>
        <dbReference type="ChEBI" id="CHEBI:37565"/>
    </ligand>
</feature>
<feature type="binding site" evidence="3">
    <location>
        <position position="71"/>
    </location>
    <ligand>
        <name>Mg(2+)</name>
        <dbReference type="ChEBI" id="CHEBI:18420"/>
    </ligand>
</feature>
<feature type="binding site" evidence="3">
    <location>
        <position position="140"/>
    </location>
    <ligand>
        <name>GTP</name>
        <dbReference type="ChEBI" id="CHEBI:37565"/>
    </ligand>
</feature>
<feature type="binding site" evidence="3">
    <location>
        <position position="144"/>
    </location>
    <ligand>
        <name>GTP</name>
        <dbReference type="ChEBI" id="CHEBI:37565"/>
    </ligand>
</feature>
<feature type="binding site" evidence="3">
    <location>
        <position position="145"/>
    </location>
    <ligand>
        <name>GTP</name>
        <dbReference type="ChEBI" id="CHEBI:37565"/>
    </ligand>
</feature>
<feature type="binding site" evidence="3">
    <location>
        <position position="179"/>
    </location>
    <ligand>
        <name>GTP</name>
        <dbReference type="ChEBI" id="CHEBI:37565"/>
    </ligand>
</feature>
<feature type="binding site" evidence="3">
    <location>
        <position position="206"/>
    </location>
    <ligand>
        <name>GTP</name>
        <dbReference type="ChEBI" id="CHEBI:37565"/>
    </ligand>
</feature>
<feature type="binding site" evidence="3">
    <location>
        <position position="228"/>
    </location>
    <ligand>
        <name>GTP</name>
        <dbReference type="ChEBI" id="CHEBI:37565"/>
    </ligand>
</feature>
<feature type="site" description="Involved in polymerization">
    <location>
        <position position="450"/>
    </location>
</feature>
<feature type="modified residue" description="N6-acetyllysine" evidence="2">
    <location>
        <position position="40"/>
    </location>
</feature>
<name>TBA3_DROME</name>
<evidence type="ECO:0000250" key="1"/>
<evidence type="ECO:0000250" key="2">
    <source>
        <dbReference type="UniProtKB" id="P06603"/>
    </source>
</evidence>
<evidence type="ECO:0000250" key="3">
    <source>
        <dbReference type="UniProtKB" id="P68363"/>
    </source>
</evidence>
<evidence type="ECO:0000250" key="4">
    <source>
        <dbReference type="UniProtKB" id="P91910"/>
    </source>
</evidence>
<evidence type="ECO:0000305" key="5"/>
<proteinExistence type="evidence at transcript level"/>
<keyword id="KW-0007">Acetylation</keyword>
<keyword id="KW-0963">Cytoplasm</keyword>
<keyword id="KW-0206">Cytoskeleton</keyword>
<keyword id="KW-0342">GTP-binding</keyword>
<keyword id="KW-0378">Hydrolase</keyword>
<keyword id="KW-0460">Magnesium</keyword>
<keyword id="KW-0479">Metal-binding</keyword>
<keyword id="KW-0493">Microtubule</keyword>
<keyword id="KW-0547">Nucleotide-binding</keyword>
<keyword id="KW-1185">Reference proteome</keyword>
<accession>P06605</accession>
<accession>Q9VIB8</accession>
<comment type="function">
    <text>Tubulin is the major constituent of microtubules, a cylinder consisting of laterally associated linear protofilaments composed of alpha- and beta-tubulin heterodimers. Microtubules grow by the addition of GTP-tubulin dimers to the microtubule end, where a stabilizing cap forms. Below the cap, tubulin dimers are in GDP-bound state, owing to GTPase activity of alpha-tubulin.</text>
</comment>
<comment type="catalytic activity">
    <reaction evidence="3">
        <text>GTP + H2O = GDP + phosphate + H(+)</text>
        <dbReference type="Rhea" id="RHEA:19669"/>
        <dbReference type="ChEBI" id="CHEBI:15377"/>
        <dbReference type="ChEBI" id="CHEBI:15378"/>
        <dbReference type="ChEBI" id="CHEBI:37565"/>
        <dbReference type="ChEBI" id="CHEBI:43474"/>
        <dbReference type="ChEBI" id="CHEBI:58189"/>
    </reaction>
    <physiologicalReaction direction="left-to-right" evidence="3">
        <dbReference type="Rhea" id="RHEA:19670"/>
    </physiologicalReaction>
</comment>
<comment type="cofactor">
    <cofactor evidence="3">
        <name>Mg(2+)</name>
        <dbReference type="ChEBI" id="CHEBI:18420"/>
    </cofactor>
</comment>
<comment type="subunit">
    <text>Dimer of alpha and beta chains. A typical microtubule is a hollow water-filled tube with an outer diameter of 25 nm and an inner diameter of 15 nM. Alpha-beta heterodimers associate head-to-tail to form protofilaments running lengthwise along the microtubule wall with the beta-tubulin subunit facing the microtubule plus end conferring a structural polarity. Microtubules usually have 13 protofilaments but different protofilament numbers can be found in some organisms and specialized cells.</text>
</comment>
<comment type="subcellular location">
    <subcellularLocation>
        <location>Cytoplasm</location>
        <location>Cytoskeleton</location>
    </subcellularLocation>
</comment>
<comment type="PTM">
    <text evidence="1">Undergoes a tyrosination/detyrosination cycle, the cyclic removal and re-addition of a C-terminal tyrosine residue by the enzymes tubulin tyrosine carboxypeptidase (TTCP) and tubulin tyrosine ligase (TTL), respectively.</text>
</comment>
<comment type="PTM">
    <text evidence="1 2 4">Acetylation of alpha chains at Lys-40 stabilizes microtubules and affects affinity and processivity of microtubule motors. This modification has a role in multiple cellular functions, ranging from cell motility, cell cycle progression or cell differentiation to intracellular trafficking and signaling (By similarity). During the early stages of oogenesis lky/Alpha-tubulin N-acetyltransferase 2 is the main acetyltransferase responsible for Lys-40 acetylation in germline cells while Atat/alpha-tubulin N-acetyltransferase 1 is the main acetyltransferase responsible for Lys-40 acetylation in somatic cells (By similarity).</text>
</comment>
<comment type="similarity">
    <text evidence="5">Belongs to the tubulin family.</text>
</comment>
<sequence>MRECISIHVGQAGVQIGNACWELYCLEHGIQPDGQMPSDKTVGGGDDSFNTFFSETGAGKHVPRAVFVDLEPTVVDEVRTGTYRQLFHPEQLITGKEDAANNYARGHYTIGKEIVDLVLDRIRKLADQCTGLQGFLIFHSFGGGTGSGFTSLLMERLSVDYGKKSKLEFAVYPAPQVSTAVVEPYNSILTTHTTLEHSDCAFMVDNEAIYDICRRNLDIERPTYTNLNRLIGQIVSSITASLRFDGALNVDLTEFQTNLVPYPRIHFPLVTYAPVISAEKAYHEQLSVAEITNACFEPANQMVKVDPRHGKYMACCMLYRGDVVPKDVNAAIATIKTKRTIQFVDWCPTGFKVGINYQPPTVVPGGDLAKVQRAVCMLSNTTAIAEAWARLDHKFDLMYAKRAFVHWYVGEGMEEGEFSEAREDLAALEKDYEEVGMDSGDGEGEGAEEY</sequence>